<name>KPYK_STAHJ</name>
<gene>
    <name type="primary">pyk</name>
    <name type="ordered locus">SH1227</name>
</gene>
<feature type="chain" id="PRO_0000294139" description="Pyruvate kinase">
    <location>
        <begin position="1"/>
        <end position="586"/>
    </location>
</feature>
<feature type="binding site" evidence="1">
    <location>
        <position position="32"/>
    </location>
    <ligand>
        <name>substrate</name>
    </ligand>
</feature>
<feature type="binding site" evidence="2">
    <location>
        <begin position="34"/>
        <end position="37"/>
    </location>
    <ligand>
        <name>ATP</name>
        <dbReference type="ChEBI" id="CHEBI:30616"/>
    </ligand>
</feature>
<feature type="binding site" evidence="1">
    <location>
        <position position="34"/>
    </location>
    <ligand>
        <name>K(+)</name>
        <dbReference type="ChEBI" id="CHEBI:29103"/>
    </ligand>
</feature>
<feature type="binding site" evidence="1">
    <location>
        <position position="36"/>
    </location>
    <ligand>
        <name>K(+)</name>
        <dbReference type="ChEBI" id="CHEBI:29103"/>
    </ligand>
</feature>
<feature type="binding site" evidence="1">
    <location>
        <position position="66"/>
    </location>
    <ligand>
        <name>K(+)</name>
        <dbReference type="ChEBI" id="CHEBI:29103"/>
    </ligand>
</feature>
<feature type="binding site" evidence="1">
    <location>
        <position position="67"/>
    </location>
    <ligand>
        <name>K(+)</name>
        <dbReference type="ChEBI" id="CHEBI:29103"/>
    </ligand>
</feature>
<feature type="binding site" evidence="2">
    <location>
        <position position="73"/>
    </location>
    <ligand>
        <name>ATP</name>
        <dbReference type="ChEBI" id="CHEBI:30616"/>
    </ligand>
</feature>
<feature type="binding site" evidence="2">
    <location>
        <position position="156"/>
    </location>
    <ligand>
        <name>ATP</name>
        <dbReference type="ChEBI" id="CHEBI:30616"/>
    </ligand>
</feature>
<feature type="binding site" evidence="1">
    <location>
        <position position="222"/>
    </location>
    <ligand>
        <name>Mg(2+)</name>
        <dbReference type="ChEBI" id="CHEBI:18420"/>
    </ligand>
</feature>
<feature type="binding site" evidence="1">
    <location>
        <position position="245"/>
    </location>
    <ligand>
        <name>substrate</name>
    </ligand>
</feature>
<feature type="binding site" evidence="1">
    <location>
        <position position="246"/>
    </location>
    <ligand>
        <name>Mg(2+)</name>
        <dbReference type="ChEBI" id="CHEBI:18420"/>
    </ligand>
</feature>
<feature type="binding site" evidence="1">
    <location>
        <position position="246"/>
    </location>
    <ligand>
        <name>substrate</name>
    </ligand>
</feature>
<feature type="binding site" evidence="1">
    <location>
        <position position="278"/>
    </location>
    <ligand>
        <name>substrate</name>
    </ligand>
</feature>
<feature type="site" description="Transition state stabilizer" evidence="1">
    <location>
        <position position="220"/>
    </location>
</feature>
<proteinExistence type="inferred from homology"/>
<evidence type="ECO:0000250" key="1"/>
<evidence type="ECO:0000250" key="2">
    <source>
        <dbReference type="UniProtKB" id="P14618"/>
    </source>
</evidence>
<evidence type="ECO:0000305" key="3"/>
<accession>Q4L739</accession>
<dbReference type="EC" id="2.7.1.40"/>
<dbReference type="EMBL" id="AP006716">
    <property type="protein sequence ID" value="BAE04536.1"/>
    <property type="molecule type" value="Genomic_DNA"/>
</dbReference>
<dbReference type="RefSeq" id="WP_011275526.1">
    <property type="nucleotide sequence ID" value="NC_007168.1"/>
</dbReference>
<dbReference type="SMR" id="Q4L739"/>
<dbReference type="KEGG" id="sha:SH1227"/>
<dbReference type="eggNOG" id="COG0469">
    <property type="taxonomic scope" value="Bacteria"/>
</dbReference>
<dbReference type="HOGENOM" id="CLU_015439_0_2_9"/>
<dbReference type="OrthoDB" id="9812123at2"/>
<dbReference type="UniPathway" id="UPA00109">
    <property type="reaction ID" value="UER00188"/>
</dbReference>
<dbReference type="Proteomes" id="UP000000543">
    <property type="component" value="Chromosome"/>
</dbReference>
<dbReference type="GO" id="GO:0005524">
    <property type="term" value="F:ATP binding"/>
    <property type="evidence" value="ECO:0007669"/>
    <property type="project" value="UniProtKB-KW"/>
</dbReference>
<dbReference type="GO" id="GO:0016301">
    <property type="term" value="F:kinase activity"/>
    <property type="evidence" value="ECO:0007669"/>
    <property type="project" value="UniProtKB-KW"/>
</dbReference>
<dbReference type="GO" id="GO:0000287">
    <property type="term" value="F:magnesium ion binding"/>
    <property type="evidence" value="ECO:0007669"/>
    <property type="project" value="InterPro"/>
</dbReference>
<dbReference type="GO" id="GO:0030955">
    <property type="term" value="F:potassium ion binding"/>
    <property type="evidence" value="ECO:0007669"/>
    <property type="project" value="InterPro"/>
</dbReference>
<dbReference type="GO" id="GO:0004743">
    <property type="term" value="F:pyruvate kinase activity"/>
    <property type="evidence" value="ECO:0007669"/>
    <property type="project" value="UniProtKB-EC"/>
</dbReference>
<dbReference type="FunFam" id="2.40.33.10:FF:000001">
    <property type="entry name" value="Pyruvate kinase"/>
    <property type="match status" value="1"/>
</dbReference>
<dbReference type="FunFam" id="3.20.20.60:FF:000001">
    <property type="entry name" value="Pyruvate kinase"/>
    <property type="match status" value="1"/>
</dbReference>
<dbReference type="Gene3D" id="3.20.20.60">
    <property type="entry name" value="Phosphoenolpyruvate-binding domains"/>
    <property type="match status" value="1"/>
</dbReference>
<dbReference type="Gene3D" id="3.50.30.10">
    <property type="entry name" value="Phosphohistidine domain"/>
    <property type="match status" value="1"/>
</dbReference>
<dbReference type="Gene3D" id="2.40.33.10">
    <property type="entry name" value="PK beta-barrel domain-like"/>
    <property type="match status" value="1"/>
</dbReference>
<dbReference type="Gene3D" id="3.40.1380.20">
    <property type="entry name" value="Pyruvate kinase, C-terminal domain"/>
    <property type="match status" value="1"/>
</dbReference>
<dbReference type="InterPro" id="IPR008279">
    <property type="entry name" value="PEP-util_enz_mobile_dom"/>
</dbReference>
<dbReference type="InterPro" id="IPR036637">
    <property type="entry name" value="Phosphohistidine_dom_sf"/>
</dbReference>
<dbReference type="InterPro" id="IPR001697">
    <property type="entry name" value="Pyr_Knase"/>
</dbReference>
<dbReference type="InterPro" id="IPR015813">
    <property type="entry name" value="Pyrv/PenolPyrv_kinase-like_dom"/>
</dbReference>
<dbReference type="InterPro" id="IPR040442">
    <property type="entry name" value="Pyrv_kinase-like_dom_sf"/>
</dbReference>
<dbReference type="InterPro" id="IPR011037">
    <property type="entry name" value="Pyrv_Knase-like_insert_dom_sf"/>
</dbReference>
<dbReference type="InterPro" id="IPR015793">
    <property type="entry name" value="Pyrv_Knase_brl"/>
</dbReference>
<dbReference type="InterPro" id="IPR015795">
    <property type="entry name" value="Pyrv_Knase_C"/>
</dbReference>
<dbReference type="InterPro" id="IPR036918">
    <property type="entry name" value="Pyrv_Knase_C_sf"/>
</dbReference>
<dbReference type="InterPro" id="IPR015806">
    <property type="entry name" value="Pyrv_Knase_insert_dom_sf"/>
</dbReference>
<dbReference type="NCBIfam" id="NF004491">
    <property type="entry name" value="PRK05826.1"/>
    <property type="match status" value="1"/>
</dbReference>
<dbReference type="NCBIfam" id="NF004978">
    <property type="entry name" value="PRK06354.1"/>
    <property type="match status" value="1"/>
</dbReference>
<dbReference type="NCBIfam" id="TIGR01064">
    <property type="entry name" value="pyruv_kin"/>
    <property type="match status" value="1"/>
</dbReference>
<dbReference type="PANTHER" id="PTHR11817">
    <property type="entry name" value="PYRUVATE KINASE"/>
    <property type="match status" value="1"/>
</dbReference>
<dbReference type="Pfam" id="PF00391">
    <property type="entry name" value="PEP-utilizers"/>
    <property type="match status" value="1"/>
</dbReference>
<dbReference type="Pfam" id="PF00224">
    <property type="entry name" value="PK"/>
    <property type="match status" value="1"/>
</dbReference>
<dbReference type="Pfam" id="PF02887">
    <property type="entry name" value="PK_C"/>
    <property type="match status" value="1"/>
</dbReference>
<dbReference type="PRINTS" id="PR01050">
    <property type="entry name" value="PYRUVTKNASE"/>
</dbReference>
<dbReference type="SUPFAM" id="SSF51621">
    <property type="entry name" value="Phosphoenolpyruvate/pyruvate domain"/>
    <property type="match status" value="1"/>
</dbReference>
<dbReference type="SUPFAM" id="SSF52009">
    <property type="entry name" value="Phosphohistidine domain"/>
    <property type="match status" value="1"/>
</dbReference>
<dbReference type="SUPFAM" id="SSF50800">
    <property type="entry name" value="PK beta-barrel domain-like"/>
    <property type="match status" value="1"/>
</dbReference>
<dbReference type="SUPFAM" id="SSF52935">
    <property type="entry name" value="PK C-terminal domain-like"/>
    <property type="match status" value="1"/>
</dbReference>
<protein>
    <recommendedName>
        <fullName>Pyruvate kinase</fullName>
        <shortName>PK</shortName>
        <ecNumber>2.7.1.40</ecNumber>
    </recommendedName>
</protein>
<reference key="1">
    <citation type="journal article" date="2005" name="J. Bacteriol.">
        <title>Whole-genome sequencing of Staphylococcus haemolyticus uncovers the extreme plasticity of its genome and the evolution of human-colonizing staphylococcal species.</title>
        <authorList>
            <person name="Takeuchi F."/>
            <person name="Watanabe S."/>
            <person name="Baba T."/>
            <person name="Yuzawa H."/>
            <person name="Ito T."/>
            <person name="Morimoto Y."/>
            <person name="Kuroda M."/>
            <person name="Cui L."/>
            <person name="Takahashi M."/>
            <person name="Ankai A."/>
            <person name="Baba S."/>
            <person name="Fukui S."/>
            <person name="Lee J.C."/>
            <person name="Hiramatsu K."/>
        </authorList>
    </citation>
    <scope>NUCLEOTIDE SEQUENCE [LARGE SCALE GENOMIC DNA]</scope>
    <source>
        <strain>JCSC1435</strain>
    </source>
</reference>
<organism>
    <name type="scientific">Staphylococcus haemolyticus (strain JCSC1435)</name>
    <dbReference type="NCBI Taxonomy" id="279808"/>
    <lineage>
        <taxon>Bacteria</taxon>
        <taxon>Bacillati</taxon>
        <taxon>Bacillota</taxon>
        <taxon>Bacilli</taxon>
        <taxon>Bacillales</taxon>
        <taxon>Staphylococcaceae</taxon>
        <taxon>Staphylococcus</taxon>
    </lineage>
</organism>
<comment type="catalytic activity">
    <reaction>
        <text>pyruvate + ATP = phosphoenolpyruvate + ADP + H(+)</text>
        <dbReference type="Rhea" id="RHEA:18157"/>
        <dbReference type="ChEBI" id="CHEBI:15361"/>
        <dbReference type="ChEBI" id="CHEBI:15378"/>
        <dbReference type="ChEBI" id="CHEBI:30616"/>
        <dbReference type="ChEBI" id="CHEBI:58702"/>
        <dbReference type="ChEBI" id="CHEBI:456216"/>
        <dbReference type="EC" id="2.7.1.40"/>
    </reaction>
</comment>
<comment type="cofactor">
    <cofactor evidence="1">
        <name>Mg(2+)</name>
        <dbReference type="ChEBI" id="CHEBI:18420"/>
    </cofactor>
</comment>
<comment type="cofactor">
    <cofactor evidence="1">
        <name>K(+)</name>
        <dbReference type="ChEBI" id="CHEBI:29103"/>
    </cofactor>
</comment>
<comment type="pathway">
    <text>Carbohydrate degradation; glycolysis; pyruvate from D-glyceraldehyde 3-phosphate: step 5/5.</text>
</comment>
<comment type="similarity">
    <text evidence="3">Belongs to the pyruvate kinase family.</text>
</comment>
<comment type="similarity">
    <text evidence="3">In the C-terminal section; belongs to the PEP-utilizing enzyme family.</text>
</comment>
<sequence>MRKTKIVCTIGPASESEEMLEKLMKAGMNVARLNFSHGSHEEHKARIDTIRKVADRLGKTIGILLDTKGPEIRTHDMKDGLIMLEKGKEVIVSMSQVEGTPEKFSVTYEDLINDVQVGSYILLDDGLVELQVKDIDKTKGEVKCDILNTGELKNKKGVNLPGVKVNLPGITDKDADDILFGIKEDVDYIAASFVRRPSDVLDIREILERENNHNITIFPKIENQEGIDNIEEILEVSDGLMVARGDMGVEIPPESVPIVQKDLIRKCNKLGKPVITATQMLDSMQRNPRATRAEASDVANAIYDGTDAVMLSGETAAGLYPEEAVKTMRNIAVSAEAAQDYKKLLSDRTKLVETSLVNAIGVSVAHTALNLNVKAIVAATESGSTAVTISKYRPHSDIIAVTPSEHTARQLALVWGAYPVIKKGRKTTDDLLNNAVATAVETGRVTNGDLIIITAGVPTGEKGTTNMMKLHLVGDEIAKGQGVGRGSVVGKTVVANSASDLEGVDLSESVIVTNSVDETLVPYIEQAVGLITEENGITSPSAIIGLEKSIPTIIGVENATKELKDGILVTVDAAQGKIFEGYANVL</sequence>
<keyword id="KW-0067">ATP-binding</keyword>
<keyword id="KW-0324">Glycolysis</keyword>
<keyword id="KW-0418">Kinase</keyword>
<keyword id="KW-0460">Magnesium</keyword>
<keyword id="KW-0479">Metal-binding</keyword>
<keyword id="KW-0547">Nucleotide-binding</keyword>
<keyword id="KW-0630">Potassium</keyword>
<keyword id="KW-0670">Pyruvate</keyword>
<keyword id="KW-0808">Transferase</keyword>